<proteinExistence type="evidence at protein level"/>
<comment type="function">
    <text evidence="2">Binds to muscle nicotinic acetylcholine receptor (nAChR) and inhibit acetylcholine from binding to the receptor, thereby impairing neuromuscular transmission.</text>
</comment>
<comment type="subcellular location">
    <subcellularLocation>
        <location evidence="4">Secreted</location>
    </subcellularLocation>
</comment>
<comment type="tissue specificity">
    <text evidence="5">Expressed by the venom gland.</text>
</comment>
<comment type="toxic dose">
    <text evidence="3 4">LD(50) is 0.170 mg/kg by intravenous injection into mice for the minor toxin, and 0.125 mg/kg for the major toxin.</text>
</comment>
<comment type="similarity">
    <text evidence="5">Belongs to the three-finger toxin family. Short-chain subfamily. Type I alpha-neurotoxin sub-subfamily.</text>
</comment>
<organism>
    <name type="scientific">Hydrophis peronii</name>
    <name type="common">Spiny-headed seasnake</name>
    <name type="synonym">Acalyptophis peronii</name>
    <dbReference type="NCBI Taxonomy" id="8676"/>
    <lineage>
        <taxon>Eukaryota</taxon>
        <taxon>Metazoa</taxon>
        <taxon>Chordata</taxon>
        <taxon>Craniata</taxon>
        <taxon>Vertebrata</taxon>
        <taxon>Euteleostomi</taxon>
        <taxon>Lepidosauria</taxon>
        <taxon>Squamata</taxon>
        <taxon>Bifurcata</taxon>
        <taxon>Unidentata</taxon>
        <taxon>Episquamata</taxon>
        <taxon>Toxicofera</taxon>
        <taxon>Serpentes</taxon>
        <taxon>Colubroidea</taxon>
        <taxon>Elapidae</taxon>
        <taxon>Hydrophiinae</taxon>
        <taxon>Hydrophis</taxon>
    </lineage>
</organism>
<protein>
    <recommendedName>
        <fullName>Short neurotoxin 1</fullName>
    </recommendedName>
    <alternativeName>
        <fullName>Major/minor neurotoxin</fullName>
    </alternativeName>
</protein>
<dbReference type="EMBL" id="AY742210">
    <property type="protein sequence ID" value="AAV33393.1"/>
    <property type="molecule type" value="mRNA"/>
</dbReference>
<dbReference type="PIR" id="A27580">
    <property type="entry name" value="A27580"/>
</dbReference>
<dbReference type="SMR" id="Q5UFR8"/>
<dbReference type="GO" id="GO:0005576">
    <property type="term" value="C:extracellular region"/>
    <property type="evidence" value="ECO:0007669"/>
    <property type="project" value="UniProtKB-SubCell"/>
</dbReference>
<dbReference type="GO" id="GO:0030550">
    <property type="term" value="F:acetylcholine receptor inhibitor activity"/>
    <property type="evidence" value="ECO:0007669"/>
    <property type="project" value="UniProtKB-KW"/>
</dbReference>
<dbReference type="GO" id="GO:0099106">
    <property type="term" value="F:ion channel regulator activity"/>
    <property type="evidence" value="ECO:0007669"/>
    <property type="project" value="UniProtKB-KW"/>
</dbReference>
<dbReference type="GO" id="GO:0090729">
    <property type="term" value="F:toxin activity"/>
    <property type="evidence" value="ECO:0007669"/>
    <property type="project" value="UniProtKB-KW"/>
</dbReference>
<dbReference type="CDD" id="cd00206">
    <property type="entry name" value="TFP_snake_toxin"/>
    <property type="match status" value="1"/>
</dbReference>
<dbReference type="Gene3D" id="2.10.60.10">
    <property type="entry name" value="CD59"/>
    <property type="match status" value="1"/>
</dbReference>
<dbReference type="InterPro" id="IPR003571">
    <property type="entry name" value="Snake_3FTx"/>
</dbReference>
<dbReference type="InterPro" id="IPR045860">
    <property type="entry name" value="Snake_toxin-like_sf"/>
</dbReference>
<dbReference type="InterPro" id="IPR018354">
    <property type="entry name" value="Snake_toxin_con_site"/>
</dbReference>
<dbReference type="InterPro" id="IPR054131">
    <property type="entry name" value="Toxin_cobra-type"/>
</dbReference>
<dbReference type="Pfam" id="PF21947">
    <property type="entry name" value="Toxin_cobra-type"/>
    <property type="match status" value="1"/>
</dbReference>
<dbReference type="SUPFAM" id="SSF57302">
    <property type="entry name" value="Snake toxin-like"/>
    <property type="match status" value="1"/>
</dbReference>
<dbReference type="PROSITE" id="PS00272">
    <property type="entry name" value="SNAKE_TOXIN"/>
    <property type="match status" value="1"/>
</dbReference>
<evidence type="ECO:0000250" key="1">
    <source>
        <dbReference type="UniProtKB" id="P0C1Z0"/>
    </source>
</evidence>
<evidence type="ECO:0000250" key="2">
    <source>
        <dbReference type="UniProtKB" id="P60775"/>
    </source>
</evidence>
<evidence type="ECO:0000269" key="3">
    <source>
    </source>
</evidence>
<evidence type="ECO:0000269" key="4">
    <source>
    </source>
</evidence>
<evidence type="ECO:0000305" key="5"/>
<accession>Q5UFR8</accession>
<accession>P01438</accession>
<accession>P10461</accession>
<accession>P19005</accession>
<accession>P68414</accession>
<keyword id="KW-0008">Acetylcholine receptor inhibiting toxin</keyword>
<keyword id="KW-0903">Direct protein sequencing</keyword>
<keyword id="KW-1015">Disulfide bond</keyword>
<keyword id="KW-0872">Ion channel impairing toxin</keyword>
<keyword id="KW-0528">Neurotoxin</keyword>
<keyword id="KW-0629">Postsynaptic neurotoxin</keyword>
<keyword id="KW-0964">Secreted</keyword>
<keyword id="KW-0732">Signal</keyword>
<keyword id="KW-0800">Toxin</keyword>
<name>3S11_HYDPR</name>
<feature type="signal peptide" evidence="3 4">
    <location>
        <begin position="1"/>
        <end position="21"/>
    </location>
</feature>
<feature type="chain" id="PRO_5000094110" description="Short neurotoxin 1" evidence="3 4">
    <location>
        <begin position="22"/>
        <end position="81"/>
    </location>
</feature>
<feature type="disulfide bond" evidence="1">
    <location>
        <begin position="24"/>
        <end position="43"/>
    </location>
</feature>
<feature type="disulfide bond" evidence="1">
    <location>
        <begin position="38"/>
        <end position="60"/>
    </location>
</feature>
<feature type="disulfide bond" evidence="1">
    <location>
        <begin position="62"/>
        <end position="73"/>
    </location>
</feature>
<feature type="disulfide bond" evidence="1">
    <location>
        <begin position="74"/>
        <end position="79"/>
    </location>
</feature>
<feature type="sequence variant" description="In minor variant." evidence="3">
    <original>Q</original>
    <variation>E</variation>
    <location>
        <position position="64"/>
    </location>
</feature>
<sequence>MKTLLLSPVVVTIVCLDLGYTMTCCNQQSSQPKTTTNCAGNSCYKKTWSDHRGTIIERGCGCPQVKSGIKLECCHTNECNN</sequence>
<reference key="1">
    <citation type="submission" date="2004-09" db="EMBL/GenBank/DDBJ databases">
        <title>Acalyptophis peronii neurotoxin.</title>
        <authorList>
            <person name="Kini R.M."/>
            <person name="Pahari S."/>
        </authorList>
    </citation>
    <scope>NUCLEOTIDE SEQUENCE [MRNA]</scope>
    <source>
        <tissue>Venom gland</tissue>
    </source>
</reference>
<reference key="2">
    <citation type="journal article" date="1988" name="Arch. Biochem. Biophys.">
        <title>Isolation and primary structure of the major toxin from sea snake, Acalyptophis peronii, venom.</title>
        <authorList>
            <person name="Mori N."/>
            <person name="Tu A.T."/>
        </authorList>
    </citation>
    <scope>PROTEIN SEQUENCE OF 22-81</scope>
    <scope>TOXIC DOSE</scope>
    <scope>SUBCELLULAR LOCATION</scope>
    <source>
        <tissue>Venom</tissue>
    </source>
</reference>
<reference key="3">
    <citation type="journal article" date="1988" name="Biol. Chem. Hoppe-Seyler">
        <title>Amino-acid sequence of the minor neurotoxin from Acalyptophis peronii venom.</title>
        <authorList>
            <person name="Mori N."/>
            <person name="Tu A.T."/>
        </authorList>
    </citation>
    <scope>PROTEIN SEQUENCE OF 22-81</scope>
    <scope>VARIANT GLU-64</scope>
    <scope>TOXIC DOSE</scope>
    <source>
        <tissue>Venom</tissue>
    </source>
</reference>